<keyword id="KW-1185">Reference proteome</keyword>
<organism>
    <name type="scientific">Leishmania RNA virus 1 - 1 (isolate Leishmania guyanensis)</name>
    <name type="common">LRV-1-1</name>
    <dbReference type="NCBI Taxonomy" id="58103"/>
    <lineage>
        <taxon>Viruses</taxon>
        <taxon>Riboviria</taxon>
        <taxon>Orthornavirae</taxon>
        <taxon>Duplornaviricota</taxon>
        <taxon>Chrymotiviricetes</taxon>
        <taxon>Ghabrivirales</taxon>
        <taxon>Totiviridae</taxon>
        <taxon>Leishmaniavirus</taxon>
        <taxon>Leishmania RNA virus 1</taxon>
    </lineage>
</organism>
<feature type="chain" id="PRO_0000404516" description="Putative ORF1 protein">
    <location>
        <begin position="1"/>
        <end position="72"/>
    </location>
</feature>
<dbReference type="EMBL" id="M92355">
    <property type="protein sequence ID" value="AAB50022.1"/>
    <property type="molecule type" value="Genomic_RNA"/>
</dbReference>
<dbReference type="PIR" id="A46171">
    <property type="entry name" value="A46171"/>
</dbReference>
<dbReference type="RefSeq" id="NP_041189.1">
    <property type="nucleotide sequence ID" value="NC_002063.1"/>
</dbReference>
<dbReference type="KEGG" id="vg:1446406"/>
<dbReference type="Proteomes" id="UP000006721">
    <property type="component" value="Genome"/>
</dbReference>
<organismHost>
    <name type="scientific">Leishmania major</name>
    <dbReference type="NCBI Taxonomy" id="5664"/>
</organismHost>
<reference key="1">
    <citation type="journal article" date="1992" name="Proc. Natl. Acad. Sci. U.S.A.">
        <title>Molecular organization of Leishmania RNA virus 1.</title>
        <authorList>
            <person name="Stuart K.D."/>
            <person name="Weeks R."/>
            <person name="Guilbride L."/>
            <person name="Myler P.J."/>
        </authorList>
    </citation>
    <scope>NUCLEOTIDE SEQUENCE [GENOMIC RNA]</scope>
</reference>
<accession>Q83096</accession>
<proteinExistence type="predicted"/>
<protein>
    <recommendedName>
        <fullName>Putative ORF1 protein</fullName>
    </recommendedName>
</protein>
<gene>
    <name type="primary">ORF1</name>
</gene>
<name>ORF1_LRVLG</name>
<sequence>MPMSLDSLAVGMVALLVDYYSKALRASLNSTGIDRRWGDQWPSTVELTGRGVIEWESPTFCICSSSRSTAIV</sequence>